<accession>Q87FD5</accession>
<keyword id="KW-0997">Cell inner membrane</keyword>
<keyword id="KW-1003">Cell membrane</keyword>
<keyword id="KW-0418">Kinase</keyword>
<keyword id="KW-0472">Membrane</keyword>
<keyword id="KW-0598">Phosphotransferase system</keyword>
<keyword id="KW-0762">Sugar transport</keyword>
<keyword id="KW-0808">Transferase</keyword>
<keyword id="KW-0812">Transmembrane</keyword>
<keyword id="KW-1133">Transmembrane helix</keyword>
<keyword id="KW-0813">Transport</keyword>
<organism>
    <name type="scientific">Vibrio parahaemolyticus serotype O3:K6 (strain RIMD 2210633)</name>
    <dbReference type="NCBI Taxonomy" id="223926"/>
    <lineage>
        <taxon>Bacteria</taxon>
        <taxon>Pseudomonadati</taxon>
        <taxon>Pseudomonadota</taxon>
        <taxon>Gammaproteobacteria</taxon>
        <taxon>Vibrionales</taxon>
        <taxon>Vibrionaceae</taxon>
        <taxon>Vibrio</taxon>
    </lineage>
</organism>
<name>PTYBC_VIBPA</name>
<proteinExistence type="inferred from homology"/>
<protein>
    <recommendedName>
        <fullName evidence="1">PTS system N-acetylmuramic acid-specific EIIBC component</fullName>
    </recommendedName>
    <alternativeName>
        <fullName evidence="1">EIIBC-MurNAc</fullName>
    </alternativeName>
    <domain>
        <recommendedName>
            <fullName evidence="1">N-acetylmuramic acid-specific phosphotransferase enzyme IIB component</fullName>
            <ecNumber evidence="1">2.7.1.192</ecNumber>
        </recommendedName>
        <alternativeName>
            <fullName evidence="1">PTS system N-acetylmuramic acid-specific EIIB component</fullName>
        </alternativeName>
    </domain>
    <domain>
        <recommendedName>
            <fullName evidence="1">N-acetylmuramic acid permease IIC component</fullName>
        </recommendedName>
        <alternativeName>
            <fullName evidence="1">PTS system N-acetylmuramic acid-specific EIIC component</fullName>
        </alternativeName>
    </domain>
</protein>
<reference key="1">
    <citation type="journal article" date="2003" name="Lancet">
        <title>Genome sequence of Vibrio parahaemolyticus: a pathogenic mechanism distinct from that of V. cholerae.</title>
        <authorList>
            <person name="Makino K."/>
            <person name="Oshima K."/>
            <person name="Kurokawa K."/>
            <person name="Yokoyama K."/>
            <person name="Uda T."/>
            <person name="Tagomori K."/>
            <person name="Iijima Y."/>
            <person name="Najima M."/>
            <person name="Nakano M."/>
            <person name="Yamashita A."/>
            <person name="Kubota Y."/>
            <person name="Kimura S."/>
            <person name="Yasunaga T."/>
            <person name="Honda T."/>
            <person name="Shinagawa H."/>
            <person name="Hattori M."/>
            <person name="Iida T."/>
        </authorList>
    </citation>
    <scope>NUCLEOTIDE SEQUENCE [LARGE SCALE GENOMIC DNA]</scope>
    <source>
        <strain>RIMD 2210633</strain>
    </source>
</reference>
<dbReference type="EC" id="2.7.1.192" evidence="1"/>
<dbReference type="EMBL" id="BA000032">
    <property type="protein sequence ID" value="BAC63087.1"/>
    <property type="molecule type" value="Genomic_DNA"/>
</dbReference>
<dbReference type="RefSeq" id="NP_801254.1">
    <property type="nucleotide sequence ID" value="NC_004605.1"/>
</dbReference>
<dbReference type="RefSeq" id="WP_005464862.1">
    <property type="nucleotide sequence ID" value="NC_004605.1"/>
</dbReference>
<dbReference type="SMR" id="Q87FD5"/>
<dbReference type="GeneID" id="1192440"/>
<dbReference type="KEGG" id="vpa:VPA1744"/>
<dbReference type="PATRIC" id="fig|223926.6.peg.4658"/>
<dbReference type="eggNOG" id="COG1263">
    <property type="taxonomic scope" value="Bacteria"/>
</dbReference>
<dbReference type="eggNOG" id="COG1264">
    <property type="taxonomic scope" value="Bacteria"/>
</dbReference>
<dbReference type="HOGENOM" id="CLU_012312_2_0_6"/>
<dbReference type="Proteomes" id="UP000002493">
    <property type="component" value="Chromosome 2"/>
</dbReference>
<dbReference type="GO" id="GO:0005886">
    <property type="term" value="C:plasma membrane"/>
    <property type="evidence" value="ECO:0007669"/>
    <property type="project" value="UniProtKB-SubCell"/>
</dbReference>
<dbReference type="GO" id="GO:0016301">
    <property type="term" value="F:kinase activity"/>
    <property type="evidence" value="ECO:0007669"/>
    <property type="project" value="UniProtKB-KW"/>
</dbReference>
<dbReference type="GO" id="GO:0008982">
    <property type="term" value="F:protein-N(PI)-phosphohistidine-sugar phosphotransferase activity"/>
    <property type="evidence" value="ECO:0007669"/>
    <property type="project" value="InterPro"/>
</dbReference>
<dbReference type="GO" id="GO:0090588">
    <property type="term" value="F:protein-phosphocysteine-N-acetylmuramate phosphotransferase system transporter activity"/>
    <property type="evidence" value="ECO:0007669"/>
    <property type="project" value="TreeGrafter"/>
</dbReference>
<dbReference type="GO" id="GO:0009401">
    <property type="term" value="P:phosphoenolpyruvate-dependent sugar phosphotransferase system"/>
    <property type="evidence" value="ECO:0007669"/>
    <property type="project" value="UniProtKB-KW"/>
</dbReference>
<dbReference type="CDD" id="cd00212">
    <property type="entry name" value="PTS_IIB_glc"/>
    <property type="match status" value="1"/>
</dbReference>
<dbReference type="FunFam" id="3.30.1360.60:FF:000001">
    <property type="entry name" value="PTS system glucose-specific IIBC component PtsG"/>
    <property type="match status" value="1"/>
</dbReference>
<dbReference type="Gene3D" id="3.30.1360.60">
    <property type="entry name" value="Glucose permease domain IIB"/>
    <property type="match status" value="1"/>
</dbReference>
<dbReference type="InterPro" id="IPR036878">
    <property type="entry name" value="Glu_permease_IIB"/>
</dbReference>
<dbReference type="InterPro" id="IPR018113">
    <property type="entry name" value="PTrfase_EIIB_Cys"/>
</dbReference>
<dbReference type="InterPro" id="IPR003352">
    <property type="entry name" value="PTS_EIIC"/>
</dbReference>
<dbReference type="InterPro" id="IPR013013">
    <property type="entry name" value="PTS_EIIC_1"/>
</dbReference>
<dbReference type="InterPro" id="IPR001996">
    <property type="entry name" value="PTS_IIB_1"/>
</dbReference>
<dbReference type="InterPro" id="IPR050558">
    <property type="entry name" value="PTS_Sugar-Specific_Components"/>
</dbReference>
<dbReference type="NCBIfam" id="NF007152">
    <property type="entry name" value="PRK09586.1"/>
    <property type="match status" value="1"/>
</dbReference>
<dbReference type="PANTHER" id="PTHR30175">
    <property type="entry name" value="PHOSPHOTRANSFERASE SYSTEM TRANSPORT PROTEIN"/>
    <property type="match status" value="1"/>
</dbReference>
<dbReference type="PANTHER" id="PTHR30175:SF3">
    <property type="entry name" value="PTS SYSTEM N-ACETYLMURAMIC ACID-SPECIFIC EIIBC COMPONENT"/>
    <property type="match status" value="1"/>
</dbReference>
<dbReference type="Pfam" id="PF00367">
    <property type="entry name" value="PTS_EIIB"/>
    <property type="match status" value="1"/>
</dbReference>
<dbReference type="Pfam" id="PF02378">
    <property type="entry name" value="PTS_EIIC"/>
    <property type="match status" value="1"/>
</dbReference>
<dbReference type="SUPFAM" id="SSF55604">
    <property type="entry name" value="Glucose permease domain IIB"/>
    <property type="match status" value="1"/>
</dbReference>
<dbReference type="PROSITE" id="PS51098">
    <property type="entry name" value="PTS_EIIB_TYPE_1"/>
    <property type="match status" value="1"/>
</dbReference>
<dbReference type="PROSITE" id="PS01035">
    <property type="entry name" value="PTS_EIIB_TYPE_1_CYS"/>
    <property type="match status" value="1"/>
</dbReference>
<dbReference type="PROSITE" id="PS51103">
    <property type="entry name" value="PTS_EIIC_TYPE_1"/>
    <property type="match status" value="1"/>
</dbReference>
<feature type="chain" id="PRO_0000248962" description="PTS system N-acetylmuramic acid-specific EIIBC component">
    <location>
        <begin position="1"/>
        <end position="484"/>
    </location>
</feature>
<feature type="transmembrane region" description="Helical" evidence="3">
    <location>
        <begin position="127"/>
        <end position="147"/>
    </location>
</feature>
<feature type="transmembrane region" description="Helical" evidence="3">
    <location>
        <begin position="168"/>
        <end position="188"/>
    </location>
</feature>
<feature type="transmembrane region" description="Helical" evidence="3">
    <location>
        <begin position="194"/>
        <end position="214"/>
    </location>
</feature>
<feature type="transmembrane region" description="Helical" evidence="3">
    <location>
        <begin position="228"/>
        <end position="248"/>
    </location>
</feature>
<feature type="transmembrane region" description="Helical" evidence="3">
    <location>
        <begin position="266"/>
        <end position="286"/>
    </location>
</feature>
<feature type="transmembrane region" description="Helical" evidence="3">
    <location>
        <begin position="310"/>
        <end position="330"/>
    </location>
</feature>
<feature type="transmembrane region" description="Helical" evidence="3">
    <location>
        <begin position="345"/>
        <end position="365"/>
    </location>
</feature>
<feature type="transmembrane region" description="Helical" evidence="3">
    <location>
        <begin position="379"/>
        <end position="399"/>
    </location>
</feature>
<feature type="transmembrane region" description="Helical" evidence="3">
    <location>
        <begin position="409"/>
        <end position="429"/>
    </location>
</feature>
<feature type="transmembrane region" description="Helical" evidence="3">
    <location>
        <begin position="451"/>
        <end position="471"/>
    </location>
</feature>
<feature type="domain" description="PTS EIIB type-1" evidence="2">
    <location>
        <begin position="1"/>
        <end position="89"/>
    </location>
</feature>
<feature type="domain" description="PTS EIIC type-1" evidence="3">
    <location>
        <begin position="125"/>
        <end position="484"/>
    </location>
</feature>
<feature type="active site" description="Phosphocysteine intermediate; for EIIB activity" evidence="2">
    <location>
        <position position="28"/>
    </location>
</feature>
<gene>
    <name type="primary">murP</name>
    <name type="ordered locus">VPA1744</name>
</gene>
<evidence type="ECO:0000250" key="1">
    <source>
        <dbReference type="UniProtKB" id="P77272"/>
    </source>
</evidence>
<evidence type="ECO:0000255" key="2">
    <source>
        <dbReference type="PROSITE-ProRule" id="PRU00421"/>
    </source>
</evidence>
<evidence type="ECO:0000255" key="3">
    <source>
        <dbReference type="PROSITE-ProRule" id="PRU00426"/>
    </source>
</evidence>
<comment type="function">
    <text evidence="1">The phosphoenolpyruvate-dependent sugar phosphotransferase system (sugar PTS), a major carbohydrate active transport system, catalyzes the phosphorylation of incoming sugar substrates concomitantly with their translocation across the cell membrane. This system is involved in N-acetylmuramic acid (MurNAc) transport, yielding cytoplasmic MurNAc-6-P. Is also able to take up anhydro-N-acetylmuramic acid (anhMurNAc), but cannot phosphorylate the carbon 6, probably because of the 1,6-anhydro ring.</text>
</comment>
<comment type="catalytic activity">
    <reaction evidence="1">
        <text>N-acetyl-beta-D-muramate(out) + N(pros)-phospho-L-histidyl-[protein] = N-acetyl-beta-D-muramate 6-phosphate(in) + L-histidyl-[protein]</text>
        <dbReference type="Rhea" id="RHEA:33399"/>
        <dbReference type="Rhea" id="RHEA-COMP:9745"/>
        <dbReference type="Rhea" id="RHEA-COMP:9746"/>
        <dbReference type="ChEBI" id="CHEBI:29979"/>
        <dbReference type="ChEBI" id="CHEBI:58721"/>
        <dbReference type="ChEBI" id="CHEBI:64837"/>
        <dbReference type="ChEBI" id="CHEBI:64848"/>
        <dbReference type="EC" id="2.7.1.192"/>
    </reaction>
</comment>
<comment type="subcellular location">
    <subcellularLocation>
        <location evidence="3">Cell inner membrane</location>
        <topology evidence="3">Multi-pass membrane protein</topology>
    </subcellularLocation>
</comment>
<comment type="domain">
    <text evidence="2">The EIIB domain is phosphorylated by phospho-EIIA on a cysteinyl or histidyl residue, depending on the transported sugar. Then, it transfers the phosphoryl group to the sugar substrate concomitantly with the sugar uptake processed by the EIIC domain.</text>
</comment>
<comment type="domain">
    <text evidence="3">The EIIC domain forms the PTS system translocation channel and contains the specific substrate-binding site.</text>
</comment>
<sequence length="484" mass="51200">MAKITSNTVSQLLSAVGGSSNVSKCGNCMTRLRLSLANNGLADQSVIKKIPGVMGVVESDEQFQIILGPGKAQQAAEMMNQLIDSLTSGDSEEPDMPQQDLSAVAAEQKKQMKSKQTSAVQRFLSKFATIFTPLIPGFIAAGLLLGFATLLEQMFVLDQTPSQFMLDLIAYMKVFGKGLFAFLSILIGYNAQQAFGGSGVNGAILASLFVLGYNPEATSGIYSGMNEFFGFAIDPRGNIIGVLLAAIIGAQVERKVRQYMPDDLDMILTSVITLLIMGAVTFLIIMPIGGELFKGMSWLFLNLNDNPLGAAILAGLFLISVVFGIHQGFVPVYFALMEAQGFNSLFPILAMAGGGQVGASMALYFKAKKDALLRTQVKGAIIPGLLGIGEPLIYGVTLPRVKPFVTACIGGAAGGFFIGLVSYLGLPVGLNTVFGPSGIVAIPLMTSENGIFPGMMVFVAGLLISYIVGFLATYFFGCKDVDLS</sequence>